<comment type="function">
    <text evidence="1">The key enzymatic reactions in nitrogen fixation are catalyzed by the nitrogenase complex, which has 2 components: the iron protein and the molybdenum-iron protein.</text>
</comment>
<comment type="catalytic activity">
    <reaction evidence="1">
        <text>N2 + 8 reduced [2Fe-2S]-[ferredoxin] + 16 ATP + 16 H2O = H2 + 8 oxidized [2Fe-2S]-[ferredoxin] + 2 NH4(+) + 16 ADP + 16 phosphate + 6 H(+)</text>
        <dbReference type="Rhea" id="RHEA:21448"/>
        <dbReference type="Rhea" id="RHEA-COMP:10000"/>
        <dbReference type="Rhea" id="RHEA-COMP:10001"/>
        <dbReference type="ChEBI" id="CHEBI:15377"/>
        <dbReference type="ChEBI" id="CHEBI:15378"/>
        <dbReference type="ChEBI" id="CHEBI:17997"/>
        <dbReference type="ChEBI" id="CHEBI:18276"/>
        <dbReference type="ChEBI" id="CHEBI:28938"/>
        <dbReference type="ChEBI" id="CHEBI:30616"/>
        <dbReference type="ChEBI" id="CHEBI:33737"/>
        <dbReference type="ChEBI" id="CHEBI:33738"/>
        <dbReference type="ChEBI" id="CHEBI:43474"/>
        <dbReference type="ChEBI" id="CHEBI:456216"/>
        <dbReference type="EC" id="1.18.6.1"/>
    </reaction>
</comment>
<comment type="cofactor">
    <cofactor evidence="1">
        <name>[4Fe-4S] cluster</name>
        <dbReference type="ChEBI" id="CHEBI:49883"/>
    </cofactor>
    <text evidence="1">Binds 1 [4Fe-4S] cluster per dimer.</text>
</comment>
<comment type="subunit">
    <text evidence="1">Homodimer.</text>
</comment>
<comment type="PTM">
    <text evidence="1">The reversible ADP-ribosylation of Arg-97 inactivates the nitrogenase reductase and regulates nitrogenase activity.</text>
</comment>
<comment type="similarity">
    <text evidence="1">Belongs to the NifH/BchL/ChlL family.</text>
</comment>
<evidence type="ECO:0000255" key="1">
    <source>
        <dbReference type="HAMAP-Rule" id="MF_00533"/>
    </source>
</evidence>
<protein>
    <recommendedName>
        <fullName evidence="1">Nitrogenase iron protein</fullName>
        <ecNumber evidence="1">1.18.6.1</ecNumber>
    </recommendedName>
    <alternativeName>
        <fullName evidence="1">Nitrogenase Fe protein</fullName>
    </alternativeName>
    <alternativeName>
        <fullName evidence="1">Nitrogenase component II</fullName>
    </alternativeName>
    <alternativeName>
        <fullName evidence="1">Nitrogenase reductase</fullName>
    </alternativeName>
</protein>
<dbReference type="EC" id="1.18.6.1" evidence="1"/>
<dbReference type="EMBL" id="AP010656">
    <property type="protein sequence ID" value="BAG83808.1"/>
    <property type="molecule type" value="Genomic_DNA"/>
</dbReference>
<dbReference type="RefSeq" id="WP_012573569.1">
    <property type="nucleotide sequence ID" value="NC_011565.1"/>
</dbReference>
<dbReference type="SMR" id="B6YRI6"/>
<dbReference type="STRING" id="511995.CFPG_545"/>
<dbReference type="KEGG" id="aps:CFPG_545"/>
<dbReference type="eggNOG" id="COG1348">
    <property type="taxonomic scope" value="Bacteria"/>
</dbReference>
<dbReference type="HOGENOM" id="CLU_059373_0_0_10"/>
<dbReference type="OrthoDB" id="9778641at2"/>
<dbReference type="Proteomes" id="UP000000723">
    <property type="component" value="Chromosome"/>
</dbReference>
<dbReference type="GO" id="GO:0051539">
    <property type="term" value="F:4 iron, 4 sulfur cluster binding"/>
    <property type="evidence" value="ECO:0007669"/>
    <property type="project" value="UniProtKB-KW"/>
</dbReference>
<dbReference type="GO" id="GO:0005524">
    <property type="term" value="F:ATP binding"/>
    <property type="evidence" value="ECO:0007669"/>
    <property type="project" value="UniProtKB-UniRule"/>
</dbReference>
<dbReference type="GO" id="GO:0046872">
    <property type="term" value="F:metal ion binding"/>
    <property type="evidence" value="ECO:0007669"/>
    <property type="project" value="UniProtKB-KW"/>
</dbReference>
<dbReference type="GO" id="GO:0016163">
    <property type="term" value="F:nitrogenase activity"/>
    <property type="evidence" value="ECO:0007669"/>
    <property type="project" value="UniProtKB-UniRule"/>
</dbReference>
<dbReference type="GO" id="GO:0009399">
    <property type="term" value="P:nitrogen fixation"/>
    <property type="evidence" value="ECO:0007669"/>
    <property type="project" value="UniProtKB-UniRule"/>
</dbReference>
<dbReference type="CDD" id="cd02040">
    <property type="entry name" value="NifH"/>
    <property type="match status" value="1"/>
</dbReference>
<dbReference type="Gene3D" id="3.40.50.300">
    <property type="entry name" value="P-loop containing nucleotide triphosphate hydrolases"/>
    <property type="match status" value="1"/>
</dbReference>
<dbReference type="HAMAP" id="MF_00533">
    <property type="entry name" value="NifH"/>
    <property type="match status" value="1"/>
</dbReference>
<dbReference type="InterPro" id="IPR030655">
    <property type="entry name" value="NifH/chlL_CS"/>
</dbReference>
<dbReference type="InterPro" id="IPR000392">
    <property type="entry name" value="NifH/frxC"/>
</dbReference>
<dbReference type="InterPro" id="IPR005977">
    <property type="entry name" value="Nitrogenase_Fe_NifH"/>
</dbReference>
<dbReference type="InterPro" id="IPR027417">
    <property type="entry name" value="P-loop_NTPase"/>
</dbReference>
<dbReference type="NCBIfam" id="TIGR01287">
    <property type="entry name" value="nifH"/>
    <property type="match status" value="1"/>
</dbReference>
<dbReference type="PANTHER" id="PTHR42864">
    <property type="entry name" value="LIGHT-INDEPENDENT PROTOCHLOROPHYLLIDE REDUCTASE IRON-SULFUR ATP-BINDING PROTEIN"/>
    <property type="match status" value="1"/>
</dbReference>
<dbReference type="PANTHER" id="PTHR42864:SF2">
    <property type="entry name" value="LIGHT-INDEPENDENT PROTOCHLOROPHYLLIDE REDUCTASE IRON-SULFUR ATP-BINDING PROTEIN"/>
    <property type="match status" value="1"/>
</dbReference>
<dbReference type="Pfam" id="PF00142">
    <property type="entry name" value="Fer4_NifH"/>
    <property type="match status" value="1"/>
</dbReference>
<dbReference type="PIRSF" id="PIRSF000363">
    <property type="entry name" value="Nitrogenase_iron"/>
    <property type="match status" value="1"/>
</dbReference>
<dbReference type="PRINTS" id="PR00091">
    <property type="entry name" value="NITROGNASEII"/>
</dbReference>
<dbReference type="SUPFAM" id="SSF52540">
    <property type="entry name" value="P-loop containing nucleoside triphosphate hydrolases"/>
    <property type="match status" value="1"/>
</dbReference>
<dbReference type="PROSITE" id="PS00746">
    <property type="entry name" value="NIFH_FRXC_1"/>
    <property type="match status" value="1"/>
</dbReference>
<dbReference type="PROSITE" id="PS00692">
    <property type="entry name" value="NIFH_FRXC_2"/>
    <property type="match status" value="1"/>
</dbReference>
<dbReference type="PROSITE" id="PS51026">
    <property type="entry name" value="NIFH_FRXC_3"/>
    <property type="match status" value="1"/>
</dbReference>
<keyword id="KW-0004">4Fe-4S</keyword>
<keyword id="KW-0013">ADP-ribosylation</keyword>
<keyword id="KW-0067">ATP-binding</keyword>
<keyword id="KW-0408">Iron</keyword>
<keyword id="KW-0411">Iron-sulfur</keyword>
<keyword id="KW-0479">Metal-binding</keyword>
<keyword id="KW-0535">Nitrogen fixation</keyword>
<keyword id="KW-0547">Nucleotide-binding</keyword>
<keyword id="KW-0560">Oxidoreductase</keyword>
<keyword id="KW-1185">Reference proteome</keyword>
<reference key="1">
    <citation type="journal article" date="2008" name="Science">
        <title>Genome of an endosymbiont coupling N2 fixation to cellulolysis within RT protist cells in termite gut.</title>
        <authorList>
            <person name="Hongoh Y."/>
            <person name="Sharma V.K."/>
            <person name="Prakash T."/>
            <person name="Noda S."/>
            <person name="Toh H."/>
            <person name="Taylor T.D."/>
            <person name="Kudo T."/>
            <person name="Sakaki Y."/>
            <person name="Toyoda A."/>
            <person name="Hattori M."/>
            <person name="Ohkuma M."/>
        </authorList>
    </citation>
    <scope>NUCLEOTIDE SEQUENCE [LARGE SCALE GENOMIC DNA]</scope>
</reference>
<accession>B6YRI6</accession>
<proteinExistence type="inferred from homology"/>
<gene>
    <name evidence="1" type="primary">nifH</name>
    <name type="ordered locus">CFPG_545</name>
</gene>
<name>NIFH_AZOPC</name>
<organism>
    <name type="scientific">Azobacteroides pseudotrichonymphae genomovar. CFP2</name>
    <dbReference type="NCBI Taxonomy" id="511995"/>
    <lineage>
        <taxon>Bacteria</taxon>
        <taxon>Pseudomonadati</taxon>
        <taxon>Bacteroidota</taxon>
        <taxon>Bacteroidia</taxon>
        <taxon>Bacteroidales</taxon>
        <taxon>Candidatus Azobacteroides</taxon>
    </lineage>
</organism>
<feature type="chain" id="PRO_1000211853" description="Nitrogenase iron protein">
    <location>
        <begin position="1"/>
        <end position="274"/>
    </location>
</feature>
<feature type="binding site" evidence="1">
    <location>
        <begin position="8"/>
        <end position="15"/>
    </location>
    <ligand>
        <name>ATP</name>
        <dbReference type="ChEBI" id="CHEBI:30616"/>
    </ligand>
</feature>
<feature type="binding site" evidence="1">
    <location>
        <position position="94"/>
    </location>
    <ligand>
        <name>[4Fe-4S] cluster</name>
        <dbReference type="ChEBI" id="CHEBI:49883"/>
        <note>ligand shared between dimeric partners</note>
    </ligand>
</feature>
<feature type="binding site" evidence="1">
    <location>
        <position position="131"/>
    </location>
    <ligand>
        <name>[4Fe-4S] cluster</name>
        <dbReference type="ChEBI" id="CHEBI:49883"/>
        <note>ligand shared between dimeric partners</note>
    </ligand>
</feature>
<feature type="modified residue" description="ADP-ribosylarginine; by dinitrogenase reductase ADP-ribosyltransferase" evidence="1">
    <location>
        <position position="97"/>
    </location>
</feature>
<sequence length="274" mass="29874">MRKIAIYGKGGIGKSTTTQNTVAGLVEMGRKVMVVGCDPKADSTRLLLHGLAQKTVLDTLRDEGEDVELEDVMKKGFKDTSCVESGGPEPGVGCAGRGIITSINLLEQLGAYDDDKQLDYVFYDVLGDVVCGGFAMPIRDGKAQEVYIVCSGEMMAMYAANNICKSIHKFGKVGDVRLGGLICNSRKVDNEANMIGEFAKKLGTQMIHFVPRDNMVQHAEINRKTVIDYAPDHSQADEYRTLASKIDNNTMMVIPNPLSIQELEDLLIGFGIMN</sequence>